<gene>
    <name evidence="1" type="primary">rlmH</name>
    <name type="ordered locus">JJD26997_0139</name>
</gene>
<organism>
    <name type="scientific">Campylobacter jejuni subsp. doylei (strain ATCC BAA-1458 / RM4099 / 269.97)</name>
    <dbReference type="NCBI Taxonomy" id="360109"/>
    <lineage>
        <taxon>Bacteria</taxon>
        <taxon>Pseudomonadati</taxon>
        <taxon>Campylobacterota</taxon>
        <taxon>Epsilonproteobacteria</taxon>
        <taxon>Campylobacterales</taxon>
        <taxon>Campylobacteraceae</taxon>
        <taxon>Campylobacter</taxon>
    </lineage>
</organism>
<dbReference type="EC" id="2.1.1.177" evidence="1"/>
<dbReference type="EMBL" id="CP000768">
    <property type="protein sequence ID" value="ABS44612.1"/>
    <property type="molecule type" value="Genomic_DNA"/>
</dbReference>
<dbReference type="SMR" id="A7H1K5"/>
<dbReference type="KEGG" id="cjd:JJD26997_0139"/>
<dbReference type="HOGENOM" id="CLU_100552_2_1_7"/>
<dbReference type="Proteomes" id="UP000002302">
    <property type="component" value="Chromosome"/>
</dbReference>
<dbReference type="GO" id="GO:0005737">
    <property type="term" value="C:cytoplasm"/>
    <property type="evidence" value="ECO:0007669"/>
    <property type="project" value="UniProtKB-SubCell"/>
</dbReference>
<dbReference type="GO" id="GO:0070038">
    <property type="term" value="F:rRNA (pseudouridine-N3-)-methyltransferase activity"/>
    <property type="evidence" value="ECO:0007669"/>
    <property type="project" value="UniProtKB-UniRule"/>
</dbReference>
<dbReference type="CDD" id="cd18081">
    <property type="entry name" value="RlmH-like"/>
    <property type="match status" value="1"/>
</dbReference>
<dbReference type="Gene3D" id="3.40.1280.10">
    <property type="match status" value="1"/>
</dbReference>
<dbReference type="HAMAP" id="MF_00658">
    <property type="entry name" value="23SrRNA_methyltr_H"/>
    <property type="match status" value="1"/>
</dbReference>
<dbReference type="InterPro" id="IPR029028">
    <property type="entry name" value="Alpha/beta_knot_MTases"/>
</dbReference>
<dbReference type="InterPro" id="IPR003742">
    <property type="entry name" value="RlmH-like"/>
</dbReference>
<dbReference type="InterPro" id="IPR029026">
    <property type="entry name" value="tRNA_m1G_MTases_N"/>
</dbReference>
<dbReference type="PANTHER" id="PTHR33603">
    <property type="entry name" value="METHYLTRANSFERASE"/>
    <property type="match status" value="1"/>
</dbReference>
<dbReference type="PANTHER" id="PTHR33603:SF1">
    <property type="entry name" value="RIBOSOMAL RNA LARGE SUBUNIT METHYLTRANSFERASE H"/>
    <property type="match status" value="1"/>
</dbReference>
<dbReference type="Pfam" id="PF02590">
    <property type="entry name" value="SPOUT_MTase"/>
    <property type="match status" value="1"/>
</dbReference>
<dbReference type="PIRSF" id="PIRSF004505">
    <property type="entry name" value="MT_bac"/>
    <property type="match status" value="1"/>
</dbReference>
<dbReference type="SUPFAM" id="SSF75217">
    <property type="entry name" value="alpha/beta knot"/>
    <property type="match status" value="1"/>
</dbReference>
<feature type="chain" id="PRO_0000366577" description="Ribosomal RNA large subunit methyltransferase H">
    <location>
        <begin position="1"/>
        <end position="149"/>
    </location>
</feature>
<feature type="binding site" evidence="1">
    <location>
        <position position="71"/>
    </location>
    <ligand>
        <name>S-adenosyl-L-methionine</name>
        <dbReference type="ChEBI" id="CHEBI:59789"/>
    </ligand>
</feature>
<feature type="binding site" evidence="1">
    <location>
        <position position="98"/>
    </location>
    <ligand>
        <name>S-adenosyl-L-methionine</name>
        <dbReference type="ChEBI" id="CHEBI:59789"/>
    </ligand>
</feature>
<feature type="binding site" evidence="1">
    <location>
        <begin position="117"/>
        <end position="122"/>
    </location>
    <ligand>
        <name>S-adenosyl-L-methionine</name>
        <dbReference type="ChEBI" id="CHEBI:59789"/>
    </ligand>
</feature>
<evidence type="ECO:0000255" key="1">
    <source>
        <dbReference type="HAMAP-Rule" id="MF_00658"/>
    </source>
</evidence>
<comment type="function">
    <text evidence="1">Specifically methylates the pseudouridine at position 1915 (m3Psi1915) in 23S rRNA.</text>
</comment>
<comment type="catalytic activity">
    <reaction evidence="1">
        <text>pseudouridine(1915) in 23S rRNA + S-adenosyl-L-methionine = N(3)-methylpseudouridine(1915) in 23S rRNA + S-adenosyl-L-homocysteine + H(+)</text>
        <dbReference type="Rhea" id="RHEA:42752"/>
        <dbReference type="Rhea" id="RHEA-COMP:10221"/>
        <dbReference type="Rhea" id="RHEA-COMP:10222"/>
        <dbReference type="ChEBI" id="CHEBI:15378"/>
        <dbReference type="ChEBI" id="CHEBI:57856"/>
        <dbReference type="ChEBI" id="CHEBI:59789"/>
        <dbReference type="ChEBI" id="CHEBI:65314"/>
        <dbReference type="ChEBI" id="CHEBI:74486"/>
        <dbReference type="EC" id="2.1.1.177"/>
    </reaction>
</comment>
<comment type="subunit">
    <text evidence="1">Homodimer.</text>
</comment>
<comment type="subcellular location">
    <subcellularLocation>
        <location evidence="1">Cytoplasm</location>
    </subcellularLocation>
</comment>
<comment type="similarity">
    <text evidence="1">Belongs to the RNA methyltransferase RlmH family.</text>
</comment>
<keyword id="KW-0963">Cytoplasm</keyword>
<keyword id="KW-0489">Methyltransferase</keyword>
<keyword id="KW-0698">rRNA processing</keyword>
<keyword id="KW-0949">S-adenosyl-L-methionine</keyword>
<keyword id="KW-0808">Transferase</keyword>
<reference key="1">
    <citation type="submission" date="2007-07" db="EMBL/GenBank/DDBJ databases">
        <title>Complete genome sequence of Campylobacter jejuni subsp doylei 269.97 isolated from human blood.</title>
        <authorList>
            <person name="Fouts D.E."/>
            <person name="Mongodin E.F."/>
            <person name="Puiu D."/>
            <person name="Sebastian Y."/>
            <person name="Miller W.G."/>
            <person name="Mandrell R.E."/>
            <person name="Lastovica A.J."/>
            <person name="Nelson K.E."/>
        </authorList>
    </citation>
    <scope>NUCLEOTIDE SEQUENCE [LARGE SCALE GENOMIC DNA]</scope>
    <source>
        <strain>ATCC BAA-1458 / RM4099 / 269.97</strain>
    </source>
</reference>
<protein>
    <recommendedName>
        <fullName evidence="1">Ribosomal RNA large subunit methyltransferase H</fullName>
        <ecNumber evidence="1">2.1.1.177</ecNumber>
    </recommendedName>
    <alternativeName>
        <fullName evidence="1">23S rRNA (pseudouridine1915-N3)-methyltransferase</fullName>
    </alternativeName>
    <alternativeName>
        <fullName evidence="1">23S rRNA m3Psi1915 methyltransferase</fullName>
    </alternativeName>
    <alternativeName>
        <fullName evidence="1">rRNA (pseudouridine-N3-)-methyltransferase RlmH</fullName>
    </alternativeName>
</protein>
<sequence>MQVNIFYIQKSDEFKTWSEKYSKLISKYGTLKEINVFNKKIALAQNLNAIEAKKSYEEAFMPYKKGYCIALDERGKDLTSIEFAKLIQDKNELSFFIGGAYGLREEFNQSLDFRLSLSKLTLAHQFVKTLLLEQIYRAFCINNNHPYHK</sequence>
<name>RLMH_CAMJD</name>
<proteinExistence type="inferred from homology"/>
<accession>A7H1K5</accession>